<dbReference type="EMBL" id="CP000812">
    <property type="protein sequence ID" value="ABV33294.1"/>
    <property type="molecule type" value="Genomic_DNA"/>
</dbReference>
<dbReference type="RefSeq" id="WP_012002775.1">
    <property type="nucleotide sequence ID" value="NZ_BSDV01000001.1"/>
</dbReference>
<dbReference type="SMR" id="A8F560"/>
<dbReference type="STRING" id="416591.Tlet_0728"/>
<dbReference type="KEGG" id="tle:Tlet_0728"/>
<dbReference type="eggNOG" id="COG0323">
    <property type="taxonomic scope" value="Bacteria"/>
</dbReference>
<dbReference type="HOGENOM" id="CLU_004131_4_1_0"/>
<dbReference type="OrthoDB" id="9763467at2"/>
<dbReference type="Proteomes" id="UP000002016">
    <property type="component" value="Chromosome"/>
</dbReference>
<dbReference type="GO" id="GO:0032300">
    <property type="term" value="C:mismatch repair complex"/>
    <property type="evidence" value="ECO:0007669"/>
    <property type="project" value="InterPro"/>
</dbReference>
<dbReference type="GO" id="GO:0005524">
    <property type="term" value="F:ATP binding"/>
    <property type="evidence" value="ECO:0007669"/>
    <property type="project" value="InterPro"/>
</dbReference>
<dbReference type="GO" id="GO:0016887">
    <property type="term" value="F:ATP hydrolysis activity"/>
    <property type="evidence" value="ECO:0007669"/>
    <property type="project" value="InterPro"/>
</dbReference>
<dbReference type="GO" id="GO:0140664">
    <property type="term" value="F:ATP-dependent DNA damage sensor activity"/>
    <property type="evidence" value="ECO:0007669"/>
    <property type="project" value="InterPro"/>
</dbReference>
<dbReference type="GO" id="GO:0030983">
    <property type="term" value="F:mismatched DNA binding"/>
    <property type="evidence" value="ECO:0007669"/>
    <property type="project" value="InterPro"/>
</dbReference>
<dbReference type="GO" id="GO:0006298">
    <property type="term" value="P:mismatch repair"/>
    <property type="evidence" value="ECO:0007669"/>
    <property type="project" value="UniProtKB-UniRule"/>
</dbReference>
<dbReference type="CDD" id="cd16926">
    <property type="entry name" value="HATPase_MutL-MLH-PMS-like"/>
    <property type="match status" value="1"/>
</dbReference>
<dbReference type="CDD" id="cd00782">
    <property type="entry name" value="MutL_Trans"/>
    <property type="match status" value="1"/>
</dbReference>
<dbReference type="FunFam" id="3.30.565.10:FF:000003">
    <property type="entry name" value="DNA mismatch repair endonuclease MutL"/>
    <property type="match status" value="1"/>
</dbReference>
<dbReference type="Gene3D" id="3.30.230.10">
    <property type="match status" value="1"/>
</dbReference>
<dbReference type="Gene3D" id="3.30.565.10">
    <property type="entry name" value="Histidine kinase-like ATPase, C-terminal domain"/>
    <property type="match status" value="1"/>
</dbReference>
<dbReference type="Gene3D" id="3.30.1540.20">
    <property type="entry name" value="MutL, C-terminal domain, dimerisation subdomain"/>
    <property type="match status" value="1"/>
</dbReference>
<dbReference type="Gene3D" id="3.30.1370.100">
    <property type="entry name" value="MutL, C-terminal domain, regulatory subdomain"/>
    <property type="match status" value="1"/>
</dbReference>
<dbReference type="HAMAP" id="MF_00149">
    <property type="entry name" value="DNA_mis_repair"/>
    <property type="match status" value="1"/>
</dbReference>
<dbReference type="InterPro" id="IPR014762">
    <property type="entry name" value="DNA_mismatch_repair_CS"/>
</dbReference>
<dbReference type="InterPro" id="IPR020667">
    <property type="entry name" value="DNA_mismatch_repair_MutL"/>
</dbReference>
<dbReference type="InterPro" id="IPR013507">
    <property type="entry name" value="DNA_mismatch_S5_2-like"/>
</dbReference>
<dbReference type="InterPro" id="IPR036890">
    <property type="entry name" value="HATPase_C_sf"/>
</dbReference>
<dbReference type="InterPro" id="IPR002099">
    <property type="entry name" value="MutL/Mlh/PMS"/>
</dbReference>
<dbReference type="InterPro" id="IPR038973">
    <property type="entry name" value="MutL/Mlh/Pms-like"/>
</dbReference>
<dbReference type="InterPro" id="IPR014790">
    <property type="entry name" value="MutL_C"/>
</dbReference>
<dbReference type="InterPro" id="IPR042120">
    <property type="entry name" value="MutL_C_dimsub"/>
</dbReference>
<dbReference type="InterPro" id="IPR042121">
    <property type="entry name" value="MutL_C_regsub"/>
</dbReference>
<dbReference type="InterPro" id="IPR037198">
    <property type="entry name" value="MutL_C_sf"/>
</dbReference>
<dbReference type="InterPro" id="IPR020568">
    <property type="entry name" value="Ribosomal_Su5_D2-typ_SF"/>
</dbReference>
<dbReference type="InterPro" id="IPR014721">
    <property type="entry name" value="Ribsml_uS5_D2-typ_fold_subgr"/>
</dbReference>
<dbReference type="NCBIfam" id="TIGR00585">
    <property type="entry name" value="mutl"/>
    <property type="match status" value="1"/>
</dbReference>
<dbReference type="PANTHER" id="PTHR10073">
    <property type="entry name" value="DNA MISMATCH REPAIR PROTEIN MLH, PMS, MUTL"/>
    <property type="match status" value="1"/>
</dbReference>
<dbReference type="PANTHER" id="PTHR10073:SF12">
    <property type="entry name" value="DNA MISMATCH REPAIR PROTEIN MLH1"/>
    <property type="match status" value="1"/>
</dbReference>
<dbReference type="Pfam" id="PF01119">
    <property type="entry name" value="DNA_mis_repair"/>
    <property type="match status" value="1"/>
</dbReference>
<dbReference type="Pfam" id="PF13589">
    <property type="entry name" value="HATPase_c_3"/>
    <property type="match status" value="1"/>
</dbReference>
<dbReference type="Pfam" id="PF08676">
    <property type="entry name" value="MutL_C"/>
    <property type="match status" value="1"/>
</dbReference>
<dbReference type="SMART" id="SM01340">
    <property type="entry name" value="DNA_mis_repair"/>
    <property type="match status" value="1"/>
</dbReference>
<dbReference type="SMART" id="SM00853">
    <property type="entry name" value="MutL_C"/>
    <property type="match status" value="1"/>
</dbReference>
<dbReference type="SUPFAM" id="SSF55874">
    <property type="entry name" value="ATPase domain of HSP90 chaperone/DNA topoisomerase II/histidine kinase"/>
    <property type="match status" value="1"/>
</dbReference>
<dbReference type="SUPFAM" id="SSF118116">
    <property type="entry name" value="DNA mismatch repair protein MutL"/>
    <property type="match status" value="1"/>
</dbReference>
<dbReference type="SUPFAM" id="SSF54211">
    <property type="entry name" value="Ribosomal protein S5 domain 2-like"/>
    <property type="match status" value="1"/>
</dbReference>
<dbReference type="PROSITE" id="PS00058">
    <property type="entry name" value="DNA_MISMATCH_REPAIR_1"/>
    <property type="match status" value="1"/>
</dbReference>
<sequence length="549" mass="62913">MKIKRLDKSIVSRIAAGEVITGVYSVVKELIENSIDAGADRIVVELINGGKSEIKVQDNGEGMEKDDLLVCYESHTTSKIDSFQDIYTLNSFGFRGEALYSICQISKTTIFSKTASSNLGHEIEVVAGHLVYEKPVQIEKGTTVIVRDLFFNVPARRKFLKSNAVEARMAVEVFERFCLSHPHINLILTKDQQVVYNLPATTLVQRIKALFPDIPMDSLKAIQSQWKDMELHGCAVSPANLRRKKAIFTFVNGRFVVNQLLQSAIYSAYADFLHQKEHPVVIVNLFLPPKDIDVNVHPQKIEVKFSRDEEVFRFVRDSIKSQLKIPIIHHISRNTPAKVQKRQVEYKSPNAKFTTTSEEMLIPPEDFKIIGIVRKRYIIVETEDELFIVDFHAAHERLIYNKMLSSLNQNDGTDLLIPVQIELRESELALIEKNNVLKQIGFDYEIIKNQLIVKKIPTWLDQSDVKRFIIDSIDEIKLIDIYGLEEVMKKIIADISCKSALRTRDRLDLSQAKYLVREIFANKISTCPHGRPVMYSINFKELDSFFERI</sequence>
<reference key="1">
    <citation type="submission" date="2007-08" db="EMBL/GenBank/DDBJ databases">
        <title>Complete sequence of Thermotoga lettingae TMO.</title>
        <authorList>
            <consortium name="US DOE Joint Genome Institute"/>
            <person name="Copeland A."/>
            <person name="Lucas S."/>
            <person name="Lapidus A."/>
            <person name="Barry K."/>
            <person name="Glavina del Rio T."/>
            <person name="Dalin E."/>
            <person name="Tice H."/>
            <person name="Pitluck S."/>
            <person name="Foster B."/>
            <person name="Bruce D."/>
            <person name="Schmutz J."/>
            <person name="Larimer F."/>
            <person name="Land M."/>
            <person name="Hauser L."/>
            <person name="Kyrpides N."/>
            <person name="Mikhailova N."/>
            <person name="Nelson K."/>
            <person name="Gogarten J.P."/>
            <person name="Noll K."/>
            <person name="Richardson P."/>
        </authorList>
    </citation>
    <scope>NUCLEOTIDE SEQUENCE [LARGE SCALE GENOMIC DNA]</scope>
    <source>
        <strain>ATCC BAA-301 / DSM 14385 / NBRC 107922 / TMO</strain>
    </source>
</reference>
<gene>
    <name evidence="1" type="primary">mutL</name>
    <name type="ordered locus">Tlet_0728</name>
</gene>
<feature type="chain" id="PRO_1000058150" description="DNA mismatch repair protein MutL">
    <location>
        <begin position="1"/>
        <end position="549"/>
    </location>
</feature>
<protein>
    <recommendedName>
        <fullName evidence="1">DNA mismatch repair protein MutL</fullName>
    </recommendedName>
</protein>
<comment type="function">
    <text evidence="1">This protein is involved in the repair of mismatches in DNA. It is required for dam-dependent methyl-directed DNA mismatch repair. May act as a 'molecular matchmaker', a protein that promotes the formation of a stable complex between two or more DNA-binding proteins in an ATP-dependent manner without itself being part of a final effector complex.</text>
</comment>
<comment type="similarity">
    <text evidence="1">Belongs to the DNA mismatch repair MutL/HexB family.</text>
</comment>
<organism>
    <name type="scientific">Pseudothermotoga lettingae (strain ATCC BAA-301 / DSM 14385 / NBRC 107922 / TMO)</name>
    <name type="common">Thermotoga lettingae</name>
    <dbReference type="NCBI Taxonomy" id="416591"/>
    <lineage>
        <taxon>Bacteria</taxon>
        <taxon>Thermotogati</taxon>
        <taxon>Thermotogota</taxon>
        <taxon>Thermotogae</taxon>
        <taxon>Thermotogales</taxon>
        <taxon>Thermotogaceae</taxon>
        <taxon>Pseudothermotoga</taxon>
    </lineage>
</organism>
<name>MUTL_PSELT</name>
<evidence type="ECO:0000255" key="1">
    <source>
        <dbReference type="HAMAP-Rule" id="MF_00149"/>
    </source>
</evidence>
<accession>A8F560</accession>
<proteinExistence type="inferred from homology"/>
<keyword id="KW-0227">DNA damage</keyword>
<keyword id="KW-0234">DNA repair</keyword>
<keyword id="KW-1185">Reference proteome</keyword>